<comment type="function">
    <text evidence="5 7">A component of the GATOR complex, which functions as a regulator of the amino acid-sensing branch of the mTORC1 signaling pathway (PubMed:23723238, PubMed:36577058). The two GATOR subcomplexes, GATOR1 and GATOR2, regulate the mTORC1 pathway in order to mediate metabolic homeostasis, female gametogenesis and the response to amino acid limitation and complete starvation (PubMed:23723238, PubMed:36577058). GATOR2 activates the mTORC1 signaling pathway through the inhibition of the GATOR1 subcomplex, controlling the switch to cell proliferation and growth under nutrient replete conditions and during female oocyte development (PubMed:23723238). Acts as an atypical component of the GATOR2 subcomplex, which can either promote or inhibit mTORC1 signaling, depending on tissues: inhibits mTORC1 activity by preventing the activity of GATOR2 in the ovary and the eye imaginal disk brain, while it promotes mTORC1 activity in the fat body (PubMed:36577058).</text>
</comment>
<comment type="subunit">
    <text evidence="6 8">Component of the GATOR complex consisting of mio, Nup44A/Seh1, Im11, Nplr3, Nplr2, Wdr24, Wdr59 and Sec13 (PubMed:27166823). Within the GATOR complex, probable component of the GATOR2 subcomplex which is likely composed of mio, Nup44A/Seh1, Wdr24, Wdr59 and Sec13 (PubMed:27166823). The GATOR2 complex associates with unmet in the absence of S-adenosyl-L-methionine; the mio-Wdr24-Nup44A subcomplex is essential and sufficient for this interaction while Wdr59 and Sec13 are dispensable (PubMed:38514639). This association acts as a nutrient sensor to inhibit mTORC1 signaling in the absence of methionine (PubMed:38514639).</text>
</comment>
<comment type="subcellular location">
    <subcellularLocation>
        <location evidence="1">Lysosome membrane</location>
    </subcellularLocation>
</comment>
<comment type="disruption phenotype">
    <text evidence="7">Flies are viable and fertile but ovaries are significantly larger than ovaries, due to increased activity of the mTORC1 signaling pathway.</text>
</comment>
<comment type="similarity">
    <text evidence="10">Belongs to the WD repeat WDR59 family.</text>
</comment>
<comment type="sequence caution" evidence="10">
    <conflict type="frameshift">
        <sequence resource="EMBL-CDS" id="AAL39932"/>
    </conflict>
</comment>
<comment type="sequence caution" evidence="10">
    <conflict type="frameshift">
        <sequence resource="EMBL-CDS" id="AAZ66312"/>
    </conflict>
</comment>
<evidence type="ECO:0000250" key="1">
    <source>
        <dbReference type="UniProtKB" id="Q6PJI9"/>
    </source>
</evidence>
<evidence type="ECO:0000255" key="2">
    <source>
        <dbReference type="PROSITE-ProRule" id="PRU00179"/>
    </source>
</evidence>
<evidence type="ECO:0000256" key="3">
    <source>
        <dbReference type="SAM" id="MobiDB-lite"/>
    </source>
</evidence>
<evidence type="ECO:0000269" key="4">
    <source>
    </source>
</evidence>
<evidence type="ECO:0000269" key="5">
    <source>
    </source>
</evidence>
<evidence type="ECO:0000269" key="6">
    <source>
    </source>
</evidence>
<evidence type="ECO:0000269" key="7">
    <source>
    </source>
</evidence>
<evidence type="ECO:0000269" key="8">
    <source>
    </source>
</evidence>
<evidence type="ECO:0000303" key="9">
    <source>
    </source>
</evidence>
<evidence type="ECO:0000305" key="10"/>
<evidence type="ECO:0000312" key="11">
    <source>
        <dbReference type="FlyBase" id="FBgn0032339"/>
    </source>
</evidence>
<evidence type="ECO:0000312" key="12">
    <source>
        <dbReference type="Proteomes" id="UP000000803"/>
    </source>
</evidence>
<reference key="1">
    <citation type="journal article" date="2000" name="Science">
        <title>The genome sequence of Drosophila melanogaster.</title>
        <authorList>
            <person name="Adams M.D."/>
            <person name="Celniker S.E."/>
            <person name="Holt R.A."/>
            <person name="Evans C.A."/>
            <person name="Gocayne J.D."/>
            <person name="Amanatides P.G."/>
            <person name="Scherer S.E."/>
            <person name="Li P.W."/>
            <person name="Hoskins R.A."/>
            <person name="Galle R.F."/>
            <person name="George R.A."/>
            <person name="Lewis S.E."/>
            <person name="Richards S."/>
            <person name="Ashburner M."/>
            <person name="Henderson S.N."/>
            <person name="Sutton G.G."/>
            <person name="Wortman J.R."/>
            <person name="Yandell M.D."/>
            <person name="Zhang Q."/>
            <person name="Chen L.X."/>
            <person name="Brandon R.C."/>
            <person name="Rogers Y.-H.C."/>
            <person name="Blazej R.G."/>
            <person name="Champe M."/>
            <person name="Pfeiffer B.D."/>
            <person name="Wan K.H."/>
            <person name="Doyle C."/>
            <person name="Baxter E.G."/>
            <person name="Helt G."/>
            <person name="Nelson C.R."/>
            <person name="Miklos G.L.G."/>
            <person name="Abril J.F."/>
            <person name="Agbayani A."/>
            <person name="An H.-J."/>
            <person name="Andrews-Pfannkoch C."/>
            <person name="Baldwin D."/>
            <person name="Ballew R.M."/>
            <person name="Basu A."/>
            <person name="Baxendale J."/>
            <person name="Bayraktaroglu L."/>
            <person name="Beasley E.M."/>
            <person name="Beeson K.Y."/>
            <person name="Benos P.V."/>
            <person name="Berman B.P."/>
            <person name="Bhandari D."/>
            <person name="Bolshakov S."/>
            <person name="Borkova D."/>
            <person name="Botchan M.R."/>
            <person name="Bouck J."/>
            <person name="Brokstein P."/>
            <person name="Brottier P."/>
            <person name="Burtis K.C."/>
            <person name="Busam D.A."/>
            <person name="Butler H."/>
            <person name="Cadieu E."/>
            <person name="Center A."/>
            <person name="Chandra I."/>
            <person name="Cherry J.M."/>
            <person name="Cawley S."/>
            <person name="Dahlke C."/>
            <person name="Davenport L.B."/>
            <person name="Davies P."/>
            <person name="de Pablos B."/>
            <person name="Delcher A."/>
            <person name="Deng Z."/>
            <person name="Mays A.D."/>
            <person name="Dew I."/>
            <person name="Dietz S.M."/>
            <person name="Dodson K."/>
            <person name="Doup L.E."/>
            <person name="Downes M."/>
            <person name="Dugan-Rocha S."/>
            <person name="Dunkov B.C."/>
            <person name="Dunn P."/>
            <person name="Durbin K.J."/>
            <person name="Evangelista C.C."/>
            <person name="Ferraz C."/>
            <person name="Ferriera S."/>
            <person name="Fleischmann W."/>
            <person name="Fosler C."/>
            <person name="Gabrielian A.E."/>
            <person name="Garg N.S."/>
            <person name="Gelbart W.M."/>
            <person name="Glasser K."/>
            <person name="Glodek A."/>
            <person name="Gong F."/>
            <person name="Gorrell J.H."/>
            <person name="Gu Z."/>
            <person name="Guan P."/>
            <person name="Harris M."/>
            <person name="Harris N.L."/>
            <person name="Harvey D.A."/>
            <person name="Heiman T.J."/>
            <person name="Hernandez J.R."/>
            <person name="Houck J."/>
            <person name="Hostin D."/>
            <person name="Houston K.A."/>
            <person name="Howland T.J."/>
            <person name="Wei M.-H."/>
            <person name="Ibegwam C."/>
            <person name="Jalali M."/>
            <person name="Kalush F."/>
            <person name="Karpen G.H."/>
            <person name="Ke Z."/>
            <person name="Kennison J.A."/>
            <person name="Ketchum K.A."/>
            <person name="Kimmel B.E."/>
            <person name="Kodira C.D."/>
            <person name="Kraft C.L."/>
            <person name="Kravitz S."/>
            <person name="Kulp D."/>
            <person name="Lai Z."/>
            <person name="Lasko P."/>
            <person name="Lei Y."/>
            <person name="Levitsky A.A."/>
            <person name="Li J.H."/>
            <person name="Li Z."/>
            <person name="Liang Y."/>
            <person name="Lin X."/>
            <person name="Liu X."/>
            <person name="Mattei B."/>
            <person name="McIntosh T.C."/>
            <person name="McLeod M.P."/>
            <person name="McPherson D."/>
            <person name="Merkulov G."/>
            <person name="Milshina N.V."/>
            <person name="Mobarry C."/>
            <person name="Morris J."/>
            <person name="Moshrefi A."/>
            <person name="Mount S.M."/>
            <person name="Moy M."/>
            <person name="Murphy B."/>
            <person name="Murphy L."/>
            <person name="Muzny D.M."/>
            <person name="Nelson D.L."/>
            <person name="Nelson D.R."/>
            <person name="Nelson K.A."/>
            <person name="Nixon K."/>
            <person name="Nusskern D.R."/>
            <person name="Pacleb J.M."/>
            <person name="Palazzolo M."/>
            <person name="Pittman G.S."/>
            <person name="Pan S."/>
            <person name="Pollard J."/>
            <person name="Puri V."/>
            <person name="Reese M.G."/>
            <person name="Reinert K."/>
            <person name="Remington K."/>
            <person name="Saunders R.D.C."/>
            <person name="Scheeler F."/>
            <person name="Shen H."/>
            <person name="Shue B.C."/>
            <person name="Siden-Kiamos I."/>
            <person name="Simpson M."/>
            <person name="Skupski M.P."/>
            <person name="Smith T.J."/>
            <person name="Spier E."/>
            <person name="Spradling A.C."/>
            <person name="Stapleton M."/>
            <person name="Strong R."/>
            <person name="Sun E."/>
            <person name="Svirskas R."/>
            <person name="Tector C."/>
            <person name="Turner R."/>
            <person name="Venter E."/>
            <person name="Wang A.H."/>
            <person name="Wang X."/>
            <person name="Wang Z.-Y."/>
            <person name="Wassarman D.A."/>
            <person name="Weinstock G.M."/>
            <person name="Weissenbach J."/>
            <person name="Williams S.M."/>
            <person name="Woodage T."/>
            <person name="Worley K.C."/>
            <person name="Wu D."/>
            <person name="Yang S."/>
            <person name="Yao Q.A."/>
            <person name="Ye J."/>
            <person name="Yeh R.-F."/>
            <person name="Zaveri J.S."/>
            <person name="Zhan M."/>
            <person name="Zhang G."/>
            <person name="Zhao Q."/>
            <person name="Zheng L."/>
            <person name="Zheng X.H."/>
            <person name="Zhong F.N."/>
            <person name="Zhong W."/>
            <person name="Zhou X."/>
            <person name="Zhu S.C."/>
            <person name="Zhu X."/>
            <person name="Smith H.O."/>
            <person name="Gibbs R.A."/>
            <person name="Myers E.W."/>
            <person name="Rubin G.M."/>
            <person name="Venter J.C."/>
        </authorList>
    </citation>
    <scope>NUCLEOTIDE SEQUENCE [LARGE SCALE GENOMIC DNA]</scope>
    <source>
        <strain>Berkeley</strain>
    </source>
</reference>
<reference key="2">
    <citation type="journal article" date="2002" name="Genome Biol.">
        <title>Annotation of the Drosophila melanogaster euchromatic genome: a systematic review.</title>
        <authorList>
            <person name="Misra S."/>
            <person name="Crosby M.A."/>
            <person name="Mungall C.J."/>
            <person name="Matthews B.B."/>
            <person name="Campbell K.S."/>
            <person name="Hradecky P."/>
            <person name="Huang Y."/>
            <person name="Kaminker J.S."/>
            <person name="Millburn G.H."/>
            <person name="Prochnik S.E."/>
            <person name="Smith C.D."/>
            <person name="Tupy J.L."/>
            <person name="Whitfield E.J."/>
            <person name="Bayraktaroglu L."/>
            <person name="Berman B.P."/>
            <person name="Bettencourt B.R."/>
            <person name="Celniker S.E."/>
            <person name="de Grey A.D.N.J."/>
            <person name="Drysdale R.A."/>
            <person name="Harris N.L."/>
            <person name="Richter J."/>
            <person name="Russo S."/>
            <person name="Schroeder A.J."/>
            <person name="Shu S.Q."/>
            <person name="Stapleton M."/>
            <person name="Yamada C."/>
            <person name="Ashburner M."/>
            <person name="Gelbart W.M."/>
            <person name="Rubin G.M."/>
            <person name="Lewis S.E."/>
        </authorList>
    </citation>
    <scope>GENOME REANNOTATION</scope>
    <source>
        <strain>Berkeley</strain>
    </source>
</reference>
<reference key="3">
    <citation type="journal article" date="2002" name="Genome Biol.">
        <title>A Drosophila full-length cDNA resource.</title>
        <authorList>
            <person name="Stapleton M."/>
            <person name="Carlson J.W."/>
            <person name="Brokstein P."/>
            <person name="Yu C."/>
            <person name="Champe M."/>
            <person name="George R.A."/>
            <person name="Guarin H."/>
            <person name="Kronmiller B."/>
            <person name="Pacleb J.M."/>
            <person name="Park S."/>
            <person name="Wan K.H."/>
            <person name="Rubin G.M."/>
            <person name="Celniker S.E."/>
        </authorList>
    </citation>
    <scope>NUCLEOTIDE SEQUENCE [LARGE SCALE MRNA]</scope>
    <source>
        <strain>Berkeley</strain>
        <tissue>Embryo</tissue>
    </source>
</reference>
<reference key="4">
    <citation type="submission" date="2008-09" db="EMBL/GenBank/DDBJ databases">
        <authorList>
            <person name="Stapleton M."/>
            <person name="Carlson J.W."/>
            <person name="Booth B."/>
            <person name="Chavez C."/>
            <person name="Frise E."/>
            <person name="George R.A."/>
            <person name="Pacleb J.M."/>
            <person name="Park S."/>
            <person name="Wan K.H."/>
            <person name="Yu C."/>
            <person name="Celniker S.E."/>
        </authorList>
    </citation>
    <scope>NUCLEOTIDE SEQUENCE [LARGE SCALE MRNA]</scope>
    <source>
        <strain>Berkeley</strain>
        <tissue>Embryo</tissue>
    </source>
</reference>
<reference key="5">
    <citation type="journal article" date="2008" name="J. Proteome Res.">
        <title>Phosphoproteome analysis of Drosophila melanogaster embryos.</title>
        <authorList>
            <person name="Zhai B."/>
            <person name="Villen J."/>
            <person name="Beausoleil S.A."/>
            <person name="Mintseris J."/>
            <person name="Gygi S.P."/>
        </authorList>
    </citation>
    <scope>PHOSPHORYLATION [LARGE SCALE ANALYSIS] AT THR-373</scope>
    <scope>IDENTIFICATION BY MASS SPECTROMETRY</scope>
    <source>
        <tissue>Embryo</tissue>
    </source>
</reference>
<reference key="6">
    <citation type="journal article" date="2013" name="Science">
        <title>A Tumor suppressor complex with GAP activity for the Rag GTPases that signal amino acid sufficiency to mTORC1.</title>
        <authorList>
            <person name="Bar-Peled L."/>
            <person name="Chantranupong L."/>
            <person name="Cherniack A.D."/>
            <person name="Chen W.W."/>
            <person name="Ottina K.A."/>
            <person name="Grabiner B.C."/>
            <person name="Spear E.D."/>
            <person name="Carter S.L."/>
            <person name="Meyerson M."/>
            <person name="Sabatini D.M."/>
        </authorList>
    </citation>
    <scope>FUNCTION</scope>
</reference>
<reference key="7">
    <citation type="journal article" date="2016" name="PLoS Genet.">
        <title>The GATOR2 component Wdr24 regulates TORC1 activity and lysosome function.</title>
        <authorList>
            <person name="Cai W."/>
            <person name="Wei Y."/>
            <person name="Jarnik M."/>
            <person name="Reich J."/>
            <person name="Lilly M.A."/>
        </authorList>
    </citation>
    <scope>IDENTIFICATION IN THE GATOR COMPLEX</scope>
</reference>
<reference key="8">
    <citation type="journal article" date="2023" name="Proc. Natl. Acad. Sci. U.S.A.">
        <title>Wdr59 promotes or inhibits TORC1 activity depending on cellular context.</title>
        <authorList>
            <person name="Zhang Y."/>
            <person name="Ting C.Y."/>
            <person name="Yang S."/>
            <person name="Reich J."/>
            <person name="Fru K."/>
            <person name="Lilly M.A."/>
        </authorList>
    </citation>
    <scope>FUNCTION</scope>
    <scope>DISRUPTION PHENOTYPE</scope>
</reference>
<reference key="9">
    <citation type="journal article" date="2024" name="Nat. Commun.">
        <title>An evolutionary mechanism to assimilate new nutrient sensors into the mTORC1 pathway.</title>
        <authorList>
            <person name="Liu G.Y."/>
            <person name="Jouandin P."/>
            <person name="Bahng R.E."/>
            <person name="Perrimon N."/>
            <person name="Sabatini D.M."/>
        </authorList>
    </citation>
    <scope>INTERACTION WITH UNMET</scope>
</reference>
<feature type="chain" id="PRO_0000280724" description="GATOR2 complex protein Wdr59">
    <location>
        <begin position="1"/>
        <end position="969"/>
    </location>
</feature>
<feature type="repeat" description="WD 1">
    <location>
        <begin position="127"/>
        <end position="167"/>
    </location>
</feature>
<feature type="repeat" description="WD 2">
    <location>
        <begin position="172"/>
        <end position="211"/>
    </location>
</feature>
<feature type="repeat" description="WD 3">
    <location>
        <begin position="215"/>
        <end position="255"/>
    </location>
</feature>
<feature type="repeat" description="WD 4">
    <location>
        <begin position="258"/>
        <end position="303"/>
    </location>
</feature>
<feature type="repeat" description="WD 5">
    <location>
        <begin position="307"/>
        <end position="351"/>
    </location>
</feature>
<feature type="domain" description="RWD" evidence="2">
    <location>
        <begin position="435"/>
        <end position="538"/>
    </location>
</feature>
<feature type="zinc finger region" description="C4-type" evidence="1">
    <location>
        <begin position="891"/>
        <end position="911"/>
    </location>
</feature>
<feature type="zinc finger region" description="RING-type; atypical" evidence="1">
    <location>
        <begin position="912"/>
        <end position="960"/>
    </location>
</feature>
<feature type="region of interest" description="Disordered" evidence="3">
    <location>
        <begin position="1"/>
        <end position="24"/>
    </location>
</feature>
<feature type="binding site" evidence="1">
    <location>
        <position position="892"/>
    </location>
    <ligand>
        <name>Zn(2+)</name>
        <dbReference type="ChEBI" id="CHEBI:29105"/>
        <label>1</label>
    </ligand>
</feature>
<feature type="binding site" evidence="1">
    <location>
        <position position="895"/>
    </location>
    <ligand>
        <name>Zn(2+)</name>
        <dbReference type="ChEBI" id="CHEBI:29105"/>
        <label>1</label>
    </ligand>
</feature>
<feature type="binding site" evidence="1">
    <location>
        <position position="904"/>
    </location>
    <ligand>
        <name>Zn(2+)</name>
        <dbReference type="ChEBI" id="CHEBI:29105"/>
        <label>1</label>
    </ligand>
</feature>
<feature type="binding site" evidence="1">
    <location>
        <position position="907"/>
    </location>
    <ligand>
        <name>Zn(2+)</name>
        <dbReference type="ChEBI" id="CHEBI:29105"/>
        <label>1</label>
    </ligand>
</feature>
<feature type="binding site" evidence="1">
    <location>
        <position position="917"/>
    </location>
    <ligand>
        <name>Zn(2+)</name>
        <dbReference type="ChEBI" id="CHEBI:29105"/>
        <label>2</label>
    </ligand>
</feature>
<feature type="binding site" evidence="1">
    <location>
        <position position="928"/>
    </location>
    <ligand>
        <name>Zn(2+)</name>
        <dbReference type="ChEBI" id="CHEBI:29105"/>
        <label>3</label>
    </ligand>
</feature>
<feature type="binding site" evidence="1">
    <location>
        <position position="933"/>
    </location>
    <ligand>
        <name>Zn(2+)</name>
        <dbReference type="ChEBI" id="CHEBI:29105"/>
        <label>4</label>
    </ligand>
</feature>
<feature type="binding site" evidence="1">
    <location>
        <position position="936"/>
    </location>
    <ligand>
        <name>Zn(2+)</name>
        <dbReference type="ChEBI" id="CHEBI:29105"/>
        <label>2</label>
    </ligand>
</feature>
<feature type="binding site" evidence="1">
    <location>
        <position position="939"/>
    </location>
    <ligand>
        <name>Zn(2+)</name>
        <dbReference type="ChEBI" id="CHEBI:29105"/>
        <label>2</label>
    </ligand>
</feature>
<feature type="binding site" evidence="1">
    <location>
        <position position="950"/>
    </location>
    <ligand>
        <name>Zn(2+)</name>
        <dbReference type="ChEBI" id="CHEBI:29105"/>
        <label>4</label>
    </ligand>
</feature>
<feature type="binding site" evidence="1">
    <location>
        <position position="953"/>
    </location>
    <ligand>
        <name>Zn(2+)</name>
        <dbReference type="ChEBI" id="CHEBI:29105"/>
        <label>4</label>
    </ligand>
</feature>
<feature type="binding site" evidence="1">
    <location>
        <position position="955"/>
    </location>
    <ligand>
        <name>Zn(2+)</name>
        <dbReference type="ChEBI" id="CHEBI:29105"/>
        <label>3</label>
    </ligand>
</feature>
<feature type="binding site" evidence="1">
    <location>
        <position position="957"/>
    </location>
    <ligand>
        <name>Zn(2+)</name>
        <dbReference type="ChEBI" id="CHEBI:29105"/>
        <label>3</label>
    </ligand>
</feature>
<feature type="modified residue" description="Phosphothreonine" evidence="4">
    <location>
        <position position="373"/>
    </location>
</feature>
<gene>
    <name evidence="9 11" type="primary">Wdr59</name>
    <name evidence="11" type="ORF">CG4705</name>
</gene>
<keyword id="KW-0458">Lysosome</keyword>
<keyword id="KW-0472">Membrane</keyword>
<keyword id="KW-0479">Metal-binding</keyword>
<keyword id="KW-0597">Phosphoprotein</keyword>
<keyword id="KW-1185">Reference proteome</keyword>
<keyword id="KW-0677">Repeat</keyword>
<keyword id="KW-0853">WD repeat</keyword>
<keyword id="KW-0862">Zinc</keyword>
<keyword id="KW-0863">Zinc-finger</keyword>
<sequence>MPPTETLRPGERGTAGGPGAGAPEQTYIVRQSNKYYEHRDSQATAMSVDYSGQWVLLAGRGHLALQRLGQDDGSLRRHERQSKYEVSVAEFAICPSRKEYCAIATSQHIDIVRWGTAEPHYEMSLRGHTRTVTDIDWHGKDPNLLVSCSIDTFSHIWDLREPRKPALSLNAVCMSGATQVGFNRVSGNLLAAAHDGDLRIWDIRKGSCPTHYITAHLNRVHGINWSHKRETCLATASQDGTVKYFDVCNPRRAEKIITTMSPVWRARYTPIGNGLVSIVVPHLGRGENSLLLWSNSKQTDPICSFVGHTDVILDFAWRPNRESSNEIELVTWSRDRTLRVWKIDDNMLKLCEPSAEEIESRFEPDLSELRVPTPPEFLHPRSILVAASLPISTGDGACNTLPMARSPSFGGGYYRREEPHIARSLTDQPTCSLHHEFSLLNTNMPHVEVDTLDAIKRYACFKICAGGHTVILQVTFTTSYPSPSAPPDFQLCQGTTLSSEVSGVLLKVLRCNALQRVKKSRTCLEQCLRALVAAMKKKVAAVGGADRSQLLLQSPRLEGALSSTLHDACIPYPRTSGVHFNAIGMLTTFAQPVNNKRLTLRQHTALTPRTFSSINGSGLLGNVMATAQREANASFYLQERMISGKPGKQRAIRQMNGSPVVHVYDTSSLLHISRRMAREFSLDKCNIAETCRKNGEICRQHGRLDLVPVWLLAELIATPQIPHETLNDLLFYKDPFKKSLLESLIMHYAISGDIQTAVLLACLFDKCPTGGGAIMEKTVRLPPQLNSQISPYHTVLPLDVKSSSSSNTWQQLKQLRSNSWSDSLDLEIKQIQSDAYACSLIRRTKMPLFDQFKRAYAEILFGWQLLSKRALILKHTQNTPPPVQGVEFVTECRKCAKPKRTPKCEPCKRPVLFCVLCRLPVKGAANACLACGHGGHIDHMMQWFEKHNVCATCGCKCLERTSELLALLS</sequence>
<dbReference type="EMBL" id="AE014134">
    <property type="protein sequence ID" value="AAS64677.1"/>
    <property type="molecule type" value="Genomic_DNA"/>
</dbReference>
<dbReference type="EMBL" id="AY069787">
    <property type="protein sequence ID" value="AAL39932.1"/>
    <property type="status" value="ALT_FRAME"/>
    <property type="molecule type" value="mRNA"/>
</dbReference>
<dbReference type="EMBL" id="BT023805">
    <property type="protein sequence ID" value="AAZ66312.1"/>
    <property type="status" value="ALT_FRAME"/>
    <property type="molecule type" value="mRNA"/>
</dbReference>
<dbReference type="EMBL" id="BT044210">
    <property type="protein sequence ID" value="ACH92275.1"/>
    <property type="molecule type" value="mRNA"/>
</dbReference>
<dbReference type="RefSeq" id="NP_609485.4">
    <property type="nucleotide sequence ID" value="NM_135641.4"/>
</dbReference>
<dbReference type="RefSeq" id="NP_995682.1">
    <property type="nucleotide sequence ID" value="NM_205960.4"/>
</dbReference>
<dbReference type="SMR" id="Q9VKK2"/>
<dbReference type="BioGRID" id="60602">
    <property type="interactions" value="1"/>
</dbReference>
<dbReference type="ComplexPortal" id="CPX-2664">
    <property type="entry name" value="GATOR2 complex"/>
</dbReference>
<dbReference type="FunCoup" id="Q9VKK2">
    <property type="interactions" value="827"/>
</dbReference>
<dbReference type="IntAct" id="Q9VKK2">
    <property type="interactions" value="8"/>
</dbReference>
<dbReference type="STRING" id="7227.FBpp0310217"/>
<dbReference type="iPTMnet" id="Q9VKK2"/>
<dbReference type="PaxDb" id="7227-FBpp0079785"/>
<dbReference type="DNASU" id="34540"/>
<dbReference type="EnsemblMetazoa" id="FBtr0080196">
    <property type="protein sequence ID" value="FBpp0079785"/>
    <property type="gene ID" value="FBgn0032339"/>
</dbReference>
<dbReference type="EnsemblMetazoa" id="FBtr0343622">
    <property type="protein sequence ID" value="FBpp0310217"/>
    <property type="gene ID" value="FBgn0032339"/>
</dbReference>
<dbReference type="GeneID" id="34540"/>
<dbReference type="KEGG" id="dme:Dmel_CG4705"/>
<dbReference type="UCSC" id="CG4705-RA">
    <property type="organism name" value="d. melanogaster"/>
</dbReference>
<dbReference type="AGR" id="FB:FBgn0032339"/>
<dbReference type="CTD" id="79726"/>
<dbReference type="FlyBase" id="FBgn0032339">
    <property type="gene designation" value="Wdr59"/>
</dbReference>
<dbReference type="VEuPathDB" id="VectorBase:FBgn0032339"/>
<dbReference type="eggNOG" id="KOG0309">
    <property type="taxonomic scope" value="Eukaryota"/>
</dbReference>
<dbReference type="GeneTree" id="ENSGT00940000157600"/>
<dbReference type="HOGENOM" id="CLU_009370_0_0_1"/>
<dbReference type="InParanoid" id="Q9VKK2"/>
<dbReference type="OMA" id="HRRETCL"/>
<dbReference type="OrthoDB" id="311712at2759"/>
<dbReference type="PhylomeDB" id="Q9VKK2"/>
<dbReference type="BioGRID-ORCS" id="34540">
    <property type="hits" value="0 hits in 1 CRISPR screen"/>
</dbReference>
<dbReference type="GenomeRNAi" id="34540"/>
<dbReference type="PRO" id="PR:Q9VKK2"/>
<dbReference type="Proteomes" id="UP000000803">
    <property type="component" value="Chromosome 2L"/>
</dbReference>
<dbReference type="Bgee" id="FBgn0032339">
    <property type="expression patterns" value="Expressed in adult Malpighian tubule (Drosophila) and 40 other cell types or tissues"/>
</dbReference>
<dbReference type="GO" id="GO:0061700">
    <property type="term" value="C:GATOR2 complex"/>
    <property type="evidence" value="ECO:0000314"/>
    <property type="project" value="UniProtKB"/>
</dbReference>
<dbReference type="GO" id="GO:0005765">
    <property type="term" value="C:lysosomal membrane"/>
    <property type="evidence" value="ECO:0007669"/>
    <property type="project" value="UniProtKB-SubCell"/>
</dbReference>
<dbReference type="GO" id="GO:0035859">
    <property type="term" value="C:Seh1-associated complex"/>
    <property type="evidence" value="ECO:0000314"/>
    <property type="project" value="FlyBase"/>
</dbReference>
<dbReference type="GO" id="GO:0005774">
    <property type="term" value="C:vacuolar membrane"/>
    <property type="evidence" value="ECO:0000318"/>
    <property type="project" value="GO_Central"/>
</dbReference>
<dbReference type="GO" id="GO:0035591">
    <property type="term" value="F:signaling adaptor activity"/>
    <property type="evidence" value="ECO:0000318"/>
    <property type="project" value="GO_Central"/>
</dbReference>
<dbReference type="GO" id="GO:0008270">
    <property type="term" value="F:zinc ion binding"/>
    <property type="evidence" value="ECO:0007669"/>
    <property type="project" value="UniProtKB-KW"/>
</dbReference>
<dbReference type="GO" id="GO:0034198">
    <property type="term" value="P:cellular response to amino acid starvation"/>
    <property type="evidence" value="ECO:0000315"/>
    <property type="project" value="UniProtKB"/>
</dbReference>
<dbReference type="GO" id="GO:1904262">
    <property type="term" value="P:negative regulation of TORC1 signaling"/>
    <property type="evidence" value="ECO:0000315"/>
    <property type="project" value="UniProtKB"/>
</dbReference>
<dbReference type="GO" id="GO:0032008">
    <property type="term" value="P:positive regulation of TOR signaling"/>
    <property type="evidence" value="ECO:0000315"/>
    <property type="project" value="UniProtKB"/>
</dbReference>
<dbReference type="GO" id="GO:1904263">
    <property type="term" value="P:positive regulation of TORC1 signaling"/>
    <property type="evidence" value="ECO:0000315"/>
    <property type="project" value="UniProtKB"/>
</dbReference>
<dbReference type="CDD" id="cd16692">
    <property type="entry name" value="mRING-H2-C3H3C2_WDR59"/>
    <property type="match status" value="1"/>
</dbReference>
<dbReference type="FunFam" id="2.130.10.10:FF:001753">
    <property type="entry name" value="GATOR complex protein Wdr59"/>
    <property type="match status" value="1"/>
</dbReference>
<dbReference type="Gene3D" id="2.130.10.10">
    <property type="entry name" value="YVTN repeat-like/Quinoprotein amine dehydrogenase"/>
    <property type="match status" value="1"/>
</dbReference>
<dbReference type="InterPro" id="IPR006575">
    <property type="entry name" value="RWD_dom"/>
</dbReference>
<dbReference type="InterPro" id="IPR015943">
    <property type="entry name" value="WD40/YVTN_repeat-like_dom_sf"/>
</dbReference>
<dbReference type="InterPro" id="IPR019775">
    <property type="entry name" value="WD40_repeat_CS"/>
</dbReference>
<dbReference type="InterPro" id="IPR036322">
    <property type="entry name" value="WD40_repeat_dom_sf"/>
</dbReference>
<dbReference type="InterPro" id="IPR001680">
    <property type="entry name" value="WD40_rpt"/>
</dbReference>
<dbReference type="InterPro" id="IPR049567">
    <property type="entry name" value="WDR59-like"/>
</dbReference>
<dbReference type="InterPro" id="IPR039456">
    <property type="entry name" value="WDR59_mRING-H2-C3H3C2"/>
</dbReference>
<dbReference type="InterPro" id="IPR049566">
    <property type="entry name" value="WDR59_RTC1-like_RING_Znf"/>
</dbReference>
<dbReference type="PANTHER" id="PTHR46170">
    <property type="entry name" value="GATOR COMPLEX PROTEIN WDR59"/>
    <property type="match status" value="1"/>
</dbReference>
<dbReference type="PANTHER" id="PTHR46170:SF1">
    <property type="entry name" value="GATOR COMPLEX PROTEIN WDR59"/>
    <property type="match status" value="1"/>
</dbReference>
<dbReference type="Pfam" id="PF00400">
    <property type="entry name" value="WD40"/>
    <property type="match status" value="3"/>
</dbReference>
<dbReference type="Pfam" id="PF17120">
    <property type="entry name" value="zf-RING_16"/>
    <property type="match status" value="1"/>
</dbReference>
<dbReference type="SMART" id="SM00320">
    <property type="entry name" value="WD40"/>
    <property type="match status" value="4"/>
</dbReference>
<dbReference type="SUPFAM" id="SSF50978">
    <property type="entry name" value="WD40 repeat-like"/>
    <property type="match status" value="1"/>
</dbReference>
<dbReference type="PROSITE" id="PS50908">
    <property type="entry name" value="RWD"/>
    <property type="match status" value="1"/>
</dbReference>
<dbReference type="PROSITE" id="PS00678">
    <property type="entry name" value="WD_REPEATS_1"/>
    <property type="match status" value="2"/>
</dbReference>
<dbReference type="PROSITE" id="PS50082">
    <property type="entry name" value="WD_REPEATS_2"/>
    <property type="match status" value="4"/>
</dbReference>
<dbReference type="PROSITE" id="PS50294">
    <property type="entry name" value="WD_REPEATS_REGION"/>
    <property type="match status" value="1"/>
</dbReference>
<organism evidence="12">
    <name type="scientific">Drosophila melanogaster</name>
    <name type="common">Fruit fly</name>
    <dbReference type="NCBI Taxonomy" id="7227"/>
    <lineage>
        <taxon>Eukaryota</taxon>
        <taxon>Metazoa</taxon>
        <taxon>Ecdysozoa</taxon>
        <taxon>Arthropoda</taxon>
        <taxon>Hexapoda</taxon>
        <taxon>Insecta</taxon>
        <taxon>Pterygota</taxon>
        <taxon>Neoptera</taxon>
        <taxon>Endopterygota</taxon>
        <taxon>Diptera</taxon>
        <taxon>Brachycera</taxon>
        <taxon>Muscomorpha</taxon>
        <taxon>Ephydroidea</taxon>
        <taxon>Drosophilidae</taxon>
        <taxon>Drosophila</taxon>
        <taxon>Sophophora</taxon>
    </lineage>
</organism>
<proteinExistence type="evidence at protein level"/>
<accession>Q9VKK2</accession>
<accession>B5RIT6</accession>
<accession>Q7KTE5</accession>
<accession>Q8T9F8</accession>
<protein>
    <recommendedName>
        <fullName evidence="9">GATOR2 complex protein Wdr59</fullName>
    </recommendedName>
</protein>
<name>WDR59_DROME</name>